<accession>B2I936</accession>
<feature type="chain" id="PRO_1000091844" description="2-dehydro-3-deoxyphosphooctonate aldolase">
    <location>
        <begin position="1"/>
        <end position="276"/>
    </location>
</feature>
<reference key="1">
    <citation type="journal article" date="2010" name="J. Bacteriol.">
        <title>Whole genome sequences of two Xylella fastidiosa strains (M12 and M23) causing almond leaf scorch disease in California.</title>
        <authorList>
            <person name="Chen J."/>
            <person name="Xie G."/>
            <person name="Han S."/>
            <person name="Chertkov O."/>
            <person name="Sims D."/>
            <person name="Civerolo E.L."/>
        </authorList>
    </citation>
    <scope>NUCLEOTIDE SEQUENCE [LARGE SCALE GENOMIC DNA]</scope>
    <source>
        <strain>M23</strain>
    </source>
</reference>
<proteinExistence type="inferred from homology"/>
<name>KDSA_XYLF2</name>
<organism>
    <name type="scientific">Xylella fastidiosa (strain M23)</name>
    <dbReference type="NCBI Taxonomy" id="405441"/>
    <lineage>
        <taxon>Bacteria</taxon>
        <taxon>Pseudomonadati</taxon>
        <taxon>Pseudomonadota</taxon>
        <taxon>Gammaproteobacteria</taxon>
        <taxon>Lysobacterales</taxon>
        <taxon>Lysobacteraceae</taxon>
        <taxon>Xylella</taxon>
    </lineage>
</organism>
<protein>
    <recommendedName>
        <fullName evidence="1">2-dehydro-3-deoxyphosphooctonate aldolase</fullName>
        <ecNumber evidence="1">2.5.1.55</ecNumber>
    </recommendedName>
    <alternativeName>
        <fullName evidence="1">3-deoxy-D-manno-octulosonic acid 8-phosphate synthase</fullName>
    </alternativeName>
    <alternativeName>
        <fullName evidence="1">KDO-8-phosphate synthase</fullName>
        <shortName evidence="1">KDO 8-P synthase</shortName>
        <shortName evidence="1">KDOPS</shortName>
    </alternativeName>
    <alternativeName>
        <fullName evidence="1">Phospho-2-dehydro-3-deoxyoctonate aldolase</fullName>
    </alternativeName>
</protein>
<evidence type="ECO:0000255" key="1">
    <source>
        <dbReference type="HAMAP-Rule" id="MF_00056"/>
    </source>
</evidence>
<gene>
    <name evidence="1" type="primary">kdsA</name>
    <name type="ordered locus">XfasM23_0567</name>
</gene>
<comment type="catalytic activity">
    <reaction evidence="1">
        <text>D-arabinose 5-phosphate + phosphoenolpyruvate + H2O = 3-deoxy-alpha-D-manno-2-octulosonate-8-phosphate + phosphate</text>
        <dbReference type="Rhea" id="RHEA:14053"/>
        <dbReference type="ChEBI" id="CHEBI:15377"/>
        <dbReference type="ChEBI" id="CHEBI:43474"/>
        <dbReference type="ChEBI" id="CHEBI:57693"/>
        <dbReference type="ChEBI" id="CHEBI:58702"/>
        <dbReference type="ChEBI" id="CHEBI:85985"/>
        <dbReference type="EC" id="2.5.1.55"/>
    </reaction>
</comment>
<comment type="pathway">
    <text evidence="1">Carbohydrate biosynthesis; 3-deoxy-D-manno-octulosonate biosynthesis; 3-deoxy-D-manno-octulosonate from D-ribulose 5-phosphate: step 2/3.</text>
</comment>
<comment type="pathway">
    <text evidence="1">Bacterial outer membrane biogenesis; lipopolysaccharide biosynthesis.</text>
</comment>
<comment type="subcellular location">
    <subcellularLocation>
        <location evidence="1">Cytoplasm</location>
    </subcellularLocation>
</comment>
<comment type="similarity">
    <text evidence="1">Belongs to the KdsA family.</text>
</comment>
<sequence length="276" mass="29697">MKLCGFEVGLNQPLFLIAGPCVIESLQLQLDTAGVLKEITSKLGLNFIFKSSFDKANRTSGSSFRGPGLEEGLKVLEAVKTQIGVPVLTDVHEYTPIDEVATVVDVLQTPAFLVRQTDFIRNVCAVGKPVNIKKGQFLSPWDMKPVVEKAKSTGNSQILVCERGASFGYNNLVSDMRSLAVMRETGCPVVFDATHSVQLPGAQGGRSGGQREFVPVLARAAVAVGISGLFAETHPDPPNALSDGPNAWPLRTMAMLLETLVELDAVTKKRGFLEQD</sequence>
<keyword id="KW-0963">Cytoplasm</keyword>
<keyword id="KW-0448">Lipopolysaccharide biosynthesis</keyword>
<keyword id="KW-0808">Transferase</keyword>
<dbReference type="EC" id="2.5.1.55" evidence="1"/>
<dbReference type="EMBL" id="CP001011">
    <property type="protein sequence ID" value="ACB92011.1"/>
    <property type="molecule type" value="Genomic_DNA"/>
</dbReference>
<dbReference type="RefSeq" id="WP_004084011.1">
    <property type="nucleotide sequence ID" value="NC_010577.1"/>
</dbReference>
<dbReference type="SMR" id="B2I936"/>
<dbReference type="GeneID" id="93904253"/>
<dbReference type="KEGG" id="xfn:XfasM23_0567"/>
<dbReference type="HOGENOM" id="CLU_036666_0_0_6"/>
<dbReference type="UniPathway" id="UPA00030"/>
<dbReference type="UniPathway" id="UPA00357">
    <property type="reaction ID" value="UER00474"/>
</dbReference>
<dbReference type="Proteomes" id="UP000001698">
    <property type="component" value="Chromosome"/>
</dbReference>
<dbReference type="GO" id="GO:0005737">
    <property type="term" value="C:cytoplasm"/>
    <property type="evidence" value="ECO:0007669"/>
    <property type="project" value="UniProtKB-SubCell"/>
</dbReference>
<dbReference type="GO" id="GO:0008676">
    <property type="term" value="F:3-deoxy-8-phosphooctulonate synthase activity"/>
    <property type="evidence" value="ECO:0007669"/>
    <property type="project" value="UniProtKB-UniRule"/>
</dbReference>
<dbReference type="GO" id="GO:0019294">
    <property type="term" value="P:keto-3-deoxy-D-manno-octulosonic acid biosynthetic process"/>
    <property type="evidence" value="ECO:0007669"/>
    <property type="project" value="UniProtKB-UniRule"/>
</dbReference>
<dbReference type="Gene3D" id="3.20.20.70">
    <property type="entry name" value="Aldolase class I"/>
    <property type="match status" value="1"/>
</dbReference>
<dbReference type="HAMAP" id="MF_00056">
    <property type="entry name" value="KDO8P_synth"/>
    <property type="match status" value="1"/>
</dbReference>
<dbReference type="InterPro" id="IPR013785">
    <property type="entry name" value="Aldolase_TIM"/>
</dbReference>
<dbReference type="InterPro" id="IPR006218">
    <property type="entry name" value="DAHP1/KDSA"/>
</dbReference>
<dbReference type="InterPro" id="IPR006269">
    <property type="entry name" value="KDO8P_synthase"/>
</dbReference>
<dbReference type="NCBIfam" id="TIGR01362">
    <property type="entry name" value="KDO8P_synth"/>
    <property type="match status" value="1"/>
</dbReference>
<dbReference type="NCBIfam" id="NF003543">
    <property type="entry name" value="PRK05198.1"/>
    <property type="match status" value="1"/>
</dbReference>
<dbReference type="PANTHER" id="PTHR21057">
    <property type="entry name" value="PHOSPHO-2-DEHYDRO-3-DEOXYHEPTONATE ALDOLASE"/>
    <property type="match status" value="1"/>
</dbReference>
<dbReference type="Pfam" id="PF00793">
    <property type="entry name" value="DAHP_synth_1"/>
    <property type="match status" value="1"/>
</dbReference>
<dbReference type="SUPFAM" id="SSF51569">
    <property type="entry name" value="Aldolase"/>
    <property type="match status" value="1"/>
</dbReference>